<gene>
    <name evidence="1" type="primary">gcvT</name>
    <name type="ordered locus">USA300HOU_1538</name>
</gene>
<protein>
    <recommendedName>
        <fullName evidence="1">Aminomethyltransferase</fullName>
        <ecNumber evidence="1">2.1.2.10</ecNumber>
    </recommendedName>
    <alternativeName>
        <fullName evidence="1">Glycine cleavage system T protein</fullName>
    </alternativeName>
</protein>
<keyword id="KW-0032">Aminotransferase</keyword>
<keyword id="KW-0808">Transferase</keyword>
<accession>A8Z476</accession>
<evidence type="ECO:0000255" key="1">
    <source>
        <dbReference type="HAMAP-Rule" id="MF_00259"/>
    </source>
</evidence>
<organism>
    <name type="scientific">Staphylococcus aureus (strain USA300 / TCH1516)</name>
    <dbReference type="NCBI Taxonomy" id="451516"/>
    <lineage>
        <taxon>Bacteria</taxon>
        <taxon>Bacillati</taxon>
        <taxon>Bacillota</taxon>
        <taxon>Bacilli</taxon>
        <taxon>Bacillales</taxon>
        <taxon>Staphylococcaceae</taxon>
        <taxon>Staphylococcus</taxon>
    </lineage>
</organism>
<feature type="chain" id="PRO_1000078597" description="Aminomethyltransferase">
    <location>
        <begin position="1"/>
        <end position="363"/>
    </location>
</feature>
<name>GCST_STAAT</name>
<proteinExistence type="inferred from homology"/>
<reference key="1">
    <citation type="journal article" date="2007" name="BMC Microbiol.">
        <title>Subtle genetic changes enhance virulence of methicillin resistant and sensitive Staphylococcus aureus.</title>
        <authorList>
            <person name="Highlander S.K."/>
            <person name="Hulten K.G."/>
            <person name="Qin X."/>
            <person name="Jiang H."/>
            <person name="Yerrapragada S."/>
            <person name="Mason E.O. Jr."/>
            <person name="Shang Y."/>
            <person name="Williams T.M."/>
            <person name="Fortunov R.M."/>
            <person name="Liu Y."/>
            <person name="Igboeli O."/>
            <person name="Petrosino J."/>
            <person name="Tirumalai M."/>
            <person name="Uzman A."/>
            <person name="Fox G.E."/>
            <person name="Cardenas A.M."/>
            <person name="Muzny D.M."/>
            <person name="Hemphill L."/>
            <person name="Ding Y."/>
            <person name="Dugan S."/>
            <person name="Blyth P.R."/>
            <person name="Buhay C.J."/>
            <person name="Dinh H.H."/>
            <person name="Hawes A.C."/>
            <person name="Holder M."/>
            <person name="Kovar C.L."/>
            <person name="Lee S.L."/>
            <person name="Liu W."/>
            <person name="Nazareth L.V."/>
            <person name="Wang Q."/>
            <person name="Zhou J."/>
            <person name="Kaplan S.L."/>
            <person name="Weinstock G.M."/>
        </authorList>
    </citation>
    <scope>NUCLEOTIDE SEQUENCE [LARGE SCALE GENOMIC DNA]</scope>
    <source>
        <strain>USA300 / TCH1516</strain>
    </source>
</reference>
<dbReference type="EC" id="2.1.2.10" evidence="1"/>
<dbReference type="EMBL" id="CP000730">
    <property type="protein sequence ID" value="ABX29545.1"/>
    <property type="molecule type" value="Genomic_DNA"/>
</dbReference>
<dbReference type="RefSeq" id="WP_000093349.1">
    <property type="nucleotide sequence ID" value="NC_010079.1"/>
</dbReference>
<dbReference type="SMR" id="A8Z476"/>
<dbReference type="KEGG" id="sax:USA300HOU_1538"/>
<dbReference type="HOGENOM" id="CLU_007884_10_2_9"/>
<dbReference type="GO" id="GO:0005829">
    <property type="term" value="C:cytosol"/>
    <property type="evidence" value="ECO:0007669"/>
    <property type="project" value="TreeGrafter"/>
</dbReference>
<dbReference type="GO" id="GO:0005960">
    <property type="term" value="C:glycine cleavage complex"/>
    <property type="evidence" value="ECO:0007669"/>
    <property type="project" value="InterPro"/>
</dbReference>
<dbReference type="GO" id="GO:0004047">
    <property type="term" value="F:aminomethyltransferase activity"/>
    <property type="evidence" value="ECO:0007669"/>
    <property type="project" value="UniProtKB-UniRule"/>
</dbReference>
<dbReference type="GO" id="GO:0008483">
    <property type="term" value="F:transaminase activity"/>
    <property type="evidence" value="ECO:0007669"/>
    <property type="project" value="UniProtKB-KW"/>
</dbReference>
<dbReference type="GO" id="GO:0019464">
    <property type="term" value="P:glycine decarboxylation via glycine cleavage system"/>
    <property type="evidence" value="ECO:0007669"/>
    <property type="project" value="UniProtKB-UniRule"/>
</dbReference>
<dbReference type="FunFam" id="2.40.30.110:FF:000007">
    <property type="entry name" value="Aminomethyltransferase"/>
    <property type="match status" value="1"/>
</dbReference>
<dbReference type="FunFam" id="3.30.70.1400:FF:000001">
    <property type="entry name" value="Aminomethyltransferase"/>
    <property type="match status" value="1"/>
</dbReference>
<dbReference type="FunFam" id="4.10.1250.10:FF:000001">
    <property type="entry name" value="Aminomethyltransferase"/>
    <property type="match status" value="1"/>
</dbReference>
<dbReference type="Gene3D" id="2.40.30.110">
    <property type="entry name" value="Aminomethyltransferase beta-barrel domains"/>
    <property type="match status" value="1"/>
</dbReference>
<dbReference type="Gene3D" id="3.30.70.1400">
    <property type="entry name" value="Aminomethyltransferase beta-barrel domains"/>
    <property type="match status" value="1"/>
</dbReference>
<dbReference type="Gene3D" id="4.10.1250.10">
    <property type="entry name" value="Aminomethyltransferase fragment"/>
    <property type="match status" value="1"/>
</dbReference>
<dbReference type="Gene3D" id="3.30.1360.120">
    <property type="entry name" value="Probable tRNA modification gtpase trme, domain 1"/>
    <property type="match status" value="1"/>
</dbReference>
<dbReference type="HAMAP" id="MF_00259">
    <property type="entry name" value="GcvT"/>
    <property type="match status" value="1"/>
</dbReference>
<dbReference type="InterPro" id="IPR006223">
    <property type="entry name" value="GCS_T"/>
</dbReference>
<dbReference type="InterPro" id="IPR022903">
    <property type="entry name" value="GCS_T_bac"/>
</dbReference>
<dbReference type="InterPro" id="IPR013977">
    <property type="entry name" value="GCST_C"/>
</dbReference>
<dbReference type="InterPro" id="IPR006222">
    <property type="entry name" value="GCV_T_N"/>
</dbReference>
<dbReference type="InterPro" id="IPR028896">
    <property type="entry name" value="GcvT/YgfZ/DmdA"/>
</dbReference>
<dbReference type="InterPro" id="IPR029043">
    <property type="entry name" value="GcvT/YgfZ_C"/>
</dbReference>
<dbReference type="InterPro" id="IPR027266">
    <property type="entry name" value="TrmE/GcvT_dom1"/>
</dbReference>
<dbReference type="NCBIfam" id="TIGR00528">
    <property type="entry name" value="gcvT"/>
    <property type="match status" value="1"/>
</dbReference>
<dbReference type="NCBIfam" id="NF001567">
    <property type="entry name" value="PRK00389.1"/>
    <property type="match status" value="1"/>
</dbReference>
<dbReference type="PANTHER" id="PTHR43757">
    <property type="entry name" value="AMINOMETHYLTRANSFERASE"/>
    <property type="match status" value="1"/>
</dbReference>
<dbReference type="PANTHER" id="PTHR43757:SF2">
    <property type="entry name" value="AMINOMETHYLTRANSFERASE, MITOCHONDRIAL"/>
    <property type="match status" value="1"/>
</dbReference>
<dbReference type="Pfam" id="PF01571">
    <property type="entry name" value="GCV_T"/>
    <property type="match status" value="1"/>
</dbReference>
<dbReference type="Pfam" id="PF08669">
    <property type="entry name" value="GCV_T_C"/>
    <property type="match status" value="1"/>
</dbReference>
<dbReference type="PIRSF" id="PIRSF006487">
    <property type="entry name" value="GcvT"/>
    <property type="match status" value="1"/>
</dbReference>
<dbReference type="SUPFAM" id="SSF101790">
    <property type="entry name" value="Aminomethyltransferase beta-barrel domain"/>
    <property type="match status" value="1"/>
</dbReference>
<dbReference type="SUPFAM" id="SSF103025">
    <property type="entry name" value="Folate-binding domain"/>
    <property type="match status" value="1"/>
</dbReference>
<sequence>MSSDLKQTPLYQNYVDRGAKIVEFGGWAMPVQFSSIKEEHNAVRYEIGLFDVSHMGEIEVTGKDASQFVQYLLSNDTDNLTTSKALYTALCNEEGGIIDDLVIYKLADDNYLLVVNAANTEKDFNWILKHKEKFDVEVQNVSNQYGQLAIQGPKARDLINQLVDEDVTEMKMFEFKQGVKLFGANVILSQSGYTGEDGFEIYCNIDDTEKIWDGLLEYNVMPCGLGARDTLRLEAGLPLHGQDLTESITPYEGGIAFASKPLIDADFIGKSVLKDQKENGAPRRTVGLELLEKGIARTGYEVMDLDGNIIGEVTSGTQSPSSGKSIALAMIKRDEFEMGRELLVQVRKRQLKAKIVKKNQIDK</sequence>
<comment type="function">
    <text evidence="1">The glycine cleavage system catalyzes the degradation of glycine.</text>
</comment>
<comment type="catalytic activity">
    <reaction evidence="1">
        <text>N(6)-[(R)-S(8)-aminomethyldihydrolipoyl]-L-lysyl-[protein] + (6S)-5,6,7,8-tetrahydrofolate = N(6)-[(R)-dihydrolipoyl]-L-lysyl-[protein] + (6R)-5,10-methylene-5,6,7,8-tetrahydrofolate + NH4(+)</text>
        <dbReference type="Rhea" id="RHEA:16945"/>
        <dbReference type="Rhea" id="RHEA-COMP:10475"/>
        <dbReference type="Rhea" id="RHEA-COMP:10492"/>
        <dbReference type="ChEBI" id="CHEBI:15636"/>
        <dbReference type="ChEBI" id="CHEBI:28938"/>
        <dbReference type="ChEBI" id="CHEBI:57453"/>
        <dbReference type="ChEBI" id="CHEBI:83100"/>
        <dbReference type="ChEBI" id="CHEBI:83143"/>
        <dbReference type="EC" id="2.1.2.10"/>
    </reaction>
</comment>
<comment type="subunit">
    <text evidence="1">The glycine cleavage system is composed of four proteins: P, T, L and H.</text>
</comment>
<comment type="similarity">
    <text evidence="1">Belongs to the GcvT family.</text>
</comment>